<proteinExistence type="inferred from homology"/>
<accession>Q3YSC5</accession>
<gene>
    <name evidence="1" type="primary">rpsO</name>
    <name type="ordered locus">Ecaj_0337</name>
</gene>
<evidence type="ECO:0000255" key="1">
    <source>
        <dbReference type="HAMAP-Rule" id="MF_01343"/>
    </source>
</evidence>
<evidence type="ECO:0000305" key="2"/>
<feature type="chain" id="PRO_0000115432" description="Small ribosomal subunit protein uS15">
    <location>
        <begin position="1"/>
        <end position="93"/>
    </location>
</feature>
<keyword id="KW-0687">Ribonucleoprotein</keyword>
<keyword id="KW-0689">Ribosomal protein</keyword>
<keyword id="KW-0694">RNA-binding</keyword>
<keyword id="KW-0699">rRNA-binding</keyword>
<dbReference type="EMBL" id="CP000107">
    <property type="protein sequence ID" value="AAZ68380.1"/>
    <property type="molecule type" value="Genomic_DNA"/>
</dbReference>
<dbReference type="RefSeq" id="WP_011304458.1">
    <property type="nucleotide sequence ID" value="NC_007354.1"/>
</dbReference>
<dbReference type="SMR" id="Q3YSC5"/>
<dbReference type="FunCoup" id="Q3YSC5">
    <property type="interactions" value="280"/>
</dbReference>
<dbReference type="STRING" id="269484.Ecaj_0337"/>
<dbReference type="KEGG" id="ecn:Ecaj_0337"/>
<dbReference type="eggNOG" id="COG0184">
    <property type="taxonomic scope" value="Bacteria"/>
</dbReference>
<dbReference type="HOGENOM" id="CLU_148518_0_0_5"/>
<dbReference type="InParanoid" id="Q3YSC5"/>
<dbReference type="Proteomes" id="UP000000435">
    <property type="component" value="Chromosome"/>
</dbReference>
<dbReference type="GO" id="GO:0022627">
    <property type="term" value="C:cytosolic small ribosomal subunit"/>
    <property type="evidence" value="ECO:0007669"/>
    <property type="project" value="TreeGrafter"/>
</dbReference>
<dbReference type="GO" id="GO:0019843">
    <property type="term" value="F:rRNA binding"/>
    <property type="evidence" value="ECO:0007669"/>
    <property type="project" value="UniProtKB-UniRule"/>
</dbReference>
<dbReference type="GO" id="GO:0003735">
    <property type="term" value="F:structural constituent of ribosome"/>
    <property type="evidence" value="ECO:0007669"/>
    <property type="project" value="InterPro"/>
</dbReference>
<dbReference type="GO" id="GO:0006412">
    <property type="term" value="P:translation"/>
    <property type="evidence" value="ECO:0007669"/>
    <property type="project" value="UniProtKB-UniRule"/>
</dbReference>
<dbReference type="CDD" id="cd00353">
    <property type="entry name" value="Ribosomal_S15p_S13e"/>
    <property type="match status" value="1"/>
</dbReference>
<dbReference type="FunFam" id="1.10.287.10:FF:000002">
    <property type="entry name" value="30S ribosomal protein S15"/>
    <property type="match status" value="1"/>
</dbReference>
<dbReference type="Gene3D" id="1.10.287.10">
    <property type="entry name" value="S15/NS1, RNA-binding"/>
    <property type="match status" value="1"/>
</dbReference>
<dbReference type="HAMAP" id="MF_01343_B">
    <property type="entry name" value="Ribosomal_uS15_B"/>
    <property type="match status" value="1"/>
</dbReference>
<dbReference type="InterPro" id="IPR000589">
    <property type="entry name" value="Ribosomal_uS15"/>
</dbReference>
<dbReference type="InterPro" id="IPR005290">
    <property type="entry name" value="Ribosomal_uS15_bac-type"/>
</dbReference>
<dbReference type="InterPro" id="IPR009068">
    <property type="entry name" value="uS15_NS1_RNA-bd_sf"/>
</dbReference>
<dbReference type="NCBIfam" id="TIGR00952">
    <property type="entry name" value="S15_bact"/>
    <property type="match status" value="1"/>
</dbReference>
<dbReference type="PANTHER" id="PTHR23321">
    <property type="entry name" value="RIBOSOMAL PROTEIN S15, BACTERIAL AND ORGANELLAR"/>
    <property type="match status" value="1"/>
</dbReference>
<dbReference type="PANTHER" id="PTHR23321:SF26">
    <property type="entry name" value="SMALL RIBOSOMAL SUBUNIT PROTEIN US15M"/>
    <property type="match status" value="1"/>
</dbReference>
<dbReference type="Pfam" id="PF00312">
    <property type="entry name" value="Ribosomal_S15"/>
    <property type="match status" value="1"/>
</dbReference>
<dbReference type="SMART" id="SM01387">
    <property type="entry name" value="Ribosomal_S15"/>
    <property type="match status" value="1"/>
</dbReference>
<dbReference type="SUPFAM" id="SSF47060">
    <property type="entry name" value="S15/NS1 RNA-binding domain"/>
    <property type="match status" value="1"/>
</dbReference>
<reference key="1">
    <citation type="journal article" date="2006" name="J. Bacteriol.">
        <title>The genome of the obligately intracellular bacterium Ehrlichia canis reveals themes of complex membrane structure and immune evasion strategies.</title>
        <authorList>
            <person name="Mavromatis K."/>
            <person name="Doyle C.K."/>
            <person name="Lykidis A."/>
            <person name="Ivanova N."/>
            <person name="Francino M.P."/>
            <person name="Chain P."/>
            <person name="Shin M."/>
            <person name="Malfatti S."/>
            <person name="Larimer F."/>
            <person name="Copeland A."/>
            <person name="Detter J.C."/>
            <person name="Land M."/>
            <person name="Richardson P.M."/>
            <person name="Yu X.J."/>
            <person name="Walker D.H."/>
            <person name="McBride J.W."/>
            <person name="Kyrpides N.C."/>
        </authorList>
    </citation>
    <scope>NUCLEOTIDE SEQUENCE [LARGE SCALE GENOMIC DNA]</scope>
    <source>
        <strain>Jake</strain>
    </source>
</reference>
<name>RS15_EHRCJ</name>
<sequence>MSITREKKSELISEYCLKKGDTGSSFVQCAILSERIRNLTEHLKTHKKDFHCRRGLMVLVYRRRNGLQYIKKKYGDDQYLALIKRLGIRDIFH</sequence>
<comment type="function">
    <text evidence="1">One of the primary rRNA binding proteins, it binds directly to 16S rRNA where it helps nucleate assembly of the platform of the 30S subunit by binding and bridging several RNA helices of the 16S rRNA.</text>
</comment>
<comment type="function">
    <text evidence="1">Forms an intersubunit bridge (bridge B4) with the 23S rRNA of the 50S subunit in the ribosome.</text>
</comment>
<comment type="subunit">
    <text evidence="1">Part of the 30S ribosomal subunit. Forms a bridge to the 50S subunit in the 70S ribosome, contacting the 23S rRNA.</text>
</comment>
<comment type="similarity">
    <text evidence="1">Belongs to the universal ribosomal protein uS15 family.</text>
</comment>
<protein>
    <recommendedName>
        <fullName evidence="1">Small ribosomal subunit protein uS15</fullName>
    </recommendedName>
    <alternativeName>
        <fullName evidence="2">30S ribosomal protein S15</fullName>
    </alternativeName>
</protein>
<organism>
    <name type="scientific">Ehrlichia canis (strain Jake)</name>
    <dbReference type="NCBI Taxonomy" id="269484"/>
    <lineage>
        <taxon>Bacteria</taxon>
        <taxon>Pseudomonadati</taxon>
        <taxon>Pseudomonadota</taxon>
        <taxon>Alphaproteobacteria</taxon>
        <taxon>Rickettsiales</taxon>
        <taxon>Anaplasmataceae</taxon>
        <taxon>Ehrlichia</taxon>
    </lineage>
</organism>